<comment type="function">
    <text evidence="1">Produces ATP from ADP in the presence of a proton gradient across the membrane. The gamma chain is believed to be important in regulating ATPase activity and the flow of protons through the CF(0) complex (By similarity).</text>
</comment>
<comment type="subunit">
    <text evidence="1">F-type ATPases have 2 components, CF(1) - the catalytic core - and CF(0) - the membrane proton channel. CF(1) has five subunits: alpha(3), beta(3), gamma(1), delta(1), epsilon(1). CF(0) has three main subunits: a, b and c (By similarity).</text>
</comment>
<comment type="subcellular location">
    <subcellularLocation>
        <location evidence="1">Cell inner membrane</location>
        <topology evidence="1">Peripheral membrane protein</topology>
    </subcellularLocation>
</comment>
<comment type="similarity">
    <text evidence="2">Belongs to the ATPase gamma chain family.</text>
</comment>
<name>ATPG_SHIFL</name>
<reference key="1">
    <citation type="journal article" date="2002" name="Nucleic Acids Res.">
        <title>Genome sequence of Shigella flexneri 2a: insights into pathogenicity through comparison with genomes of Escherichia coli K12 and O157.</title>
        <authorList>
            <person name="Jin Q."/>
            <person name="Yuan Z."/>
            <person name="Xu J."/>
            <person name="Wang Y."/>
            <person name="Shen Y."/>
            <person name="Lu W."/>
            <person name="Wang J."/>
            <person name="Liu H."/>
            <person name="Yang J."/>
            <person name="Yang F."/>
            <person name="Zhang X."/>
            <person name="Zhang J."/>
            <person name="Yang G."/>
            <person name="Wu H."/>
            <person name="Qu D."/>
            <person name="Dong J."/>
            <person name="Sun L."/>
            <person name="Xue Y."/>
            <person name="Zhao A."/>
            <person name="Gao Y."/>
            <person name="Zhu J."/>
            <person name="Kan B."/>
            <person name="Ding K."/>
            <person name="Chen S."/>
            <person name="Cheng H."/>
            <person name="Yao Z."/>
            <person name="He B."/>
            <person name="Chen R."/>
            <person name="Ma D."/>
            <person name="Qiang B."/>
            <person name="Wen Y."/>
            <person name="Hou Y."/>
            <person name="Yu J."/>
        </authorList>
    </citation>
    <scope>NUCLEOTIDE SEQUENCE [LARGE SCALE GENOMIC DNA]</scope>
    <source>
        <strain>301 / Serotype 2a</strain>
    </source>
</reference>
<reference key="2">
    <citation type="journal article" date="2003" name="Infect. Immun.">
        <title>Complete genome sequence and comparative genomics of Shigella flexneri serotype 2a strain 2457T.</title>
        <authorList>
            <person name="Wei J."/>
            <person name="Goldberg M.B."/>
            <person name="Burland V."/>
            <person name="Venkatesan M.M."/>
            <person name="Deng W."/>
            <person name="Fournier G."/>
            <person name="Mayhew G.F."/>
            <person name="Plunkett G. III"/>
            <person name="Rose D.J."/>
            <person name="Darling A."/>
            <person name="Mau B."/>
            <person name="Perna N.T."/>
            <person name="Payne S.M."/>
            <person name="Runyen-Janecky L.J."/>
            <person name="Zhou S."/>
            <person name="Schwartz D.C."/>
            <person name="Blattner F.R."/>
        </authorList>
    </citation>
    <scope>NUCLEOTIDE SEQUENCE [LARGE SCALE GENOMIC DNA]</scope>
    <source>
        <strain>ATCC 700930 / 2457T / Serotype 2a</strain>
    </source>
</reference>
<accession>P0ABA9</accession>
<accession>P00837</accession>
<accession>P00838</accession>
<feature type="chain" id="PRO_0000073370" description="ATP synthase gamma chain">
    <location>
        <begin position="1"/>
        <end position="287"/>
    </location>
</feature>
<proteinExistence type="inferred from homology"/>
<protein>
    <recommendedName>
        <fullName>ATP synthase gamma chain</fullName>
    </recommendedName>
    <alternativeName>
        <fullName>ATP synthase F1 sector gamma subunit</fullName>
    </alternativeName>
    <alternativeName>
        <fullName>F-ATPase gamma subunit</fullName>
    </alternativeName>
</protein>
<organism>
    <name type="scientific">Shigella flexneri</name>
    <dbReference type="NCBI Taxonomy" id="623"/>
    <lineage>
        <taxon>Bacteria</taxon>
        <taxon>Pseudomonadati</taxon>
        <taxon>Pseudomonadota</taxon>
        <taxon>Gammaproteobacteria</taxon>
        <taxon>Enterobacterales</taxon>
        <taxon>Enterobacteriaceae</taxon>
        <taxon>Shigella</taxon>
    </lineage>
</organism>
<gene>
    <name type="primary">atpG</name>
    <name type="ordered locus">SF3813</name>
    <name type="ordered locus">S3955</name>
</gene>
<dbReference type="EMBL" id="AE005674">
    <property type="protein sequence ID" value="AAN45253.1"/>
    <property type="molecule type" value="Genomic_DNA"/>
</dbReference>
<dbReference type="EMBL" id="AE014073">
    <property type="protein sequence ID" value="AAP18944.1"/>
    <property type="molecule type" value="Genomic_DNA"/>
</dbReference>
<dbReference type="RefSeq" id="NP_709546.1">
    <property type="nucleotide sequence ID" value="NC_004337.2"/>
</dbReference>
<dbReference type="RefSeq" id="WP_000896498.1">
    <property type="nucleotide sequence ID" value="NZ_WPGW01000050.1"/>
</dbReference>
<dbReference type="SMR" id="P0ABA9"/>
<dbReference type="STRING" id="198214.SF3813"/>
<dbReference type="PaxDb" id="198214-SF3813"/>
<dbReference type="GeneID" id="1026049"/>
<dbReference type="GeneID" id="93778234"/>
<dbReference type="KEGG" id="sfl:SF3813"/>
<dbReference type="KEGG" id="sfx:S3955"/>
<dbReference type="PATRIC" id="fig|198214.7.peg.4500"/>
<dbReference type="HOGENOM" id="CLU_050669_0_1_6"/>
<dbReference type="Proteomes" id="UP000001006">
    <property type="component" value="Chromosome"/>
</dbReference>
<dbReference type="Proteomes" id="UP000002673">
    <property type="component" value="Chromosome"/>
</dbReference>
<dbReference type="GO" id="GO:0005886">
    <property type="term" value="C:plasma membrane"/>
    <property type="evidence" value="ECO:0007669"/>
    <property type="project" value="UniProtKB-SubCell"/>
</dbReference>
<dbReference type="GO" id="GO:0045259">
    <property type="term" value="C:proton-transporting ATP synthase complex"/>
    <property type="evidence" value="ECO:0007669"/>
    <property type="project" value="UniProtKB-KW"/>
</dbReference>
<dbReference type="GO" id="GO:0005524">
    <property type="term" value="F:ATP binding"/>
    <property type="evidence" value="ECO:0007669"/>
    <property type="project" value="UniProtKB-UniRule"/>
</dbReference>
<dbReference type="GO" id="GO:0046933">
    <property type="term" value="F:proton-transporting ATP synthase activity, rotational mechanism"/>
    <property type="evidence" value="ECO:0007669"/>
    <property type="project" value="UniProtKB-UniRule"/>
</dbReference>
<dbReference type="GO" id="GO:0042777">
    <property type="term" value="P:proton motive force-driven plasma membrane ATP synthesis"/>
    <property type="evidence" value="ECO:0007669"/>
    <property type="project" value="UniProtKB-UniRule"/>
</dbReference>
<dbReference type="CDD" id="cd12151">
    <property type="entry name" value="F1-ATPase_gamma"/>
    <property type="match status" value="1"/>
</dbReference>
<dbReference type="FunFam" id="1.10.287.80:FF:000005">
    <property type="entry name" value="ATP synthase gamma chain"/>
    <property type="match status" value="2"/>
</dbReference>
<dbReference type="FunFam" id="3.40.1380.10:FF:000001">
    <property type="entry name" value="ATP synthase gamma chain"/>
    <property type="match status" value="1"/>
</dbReference>
<dbReference type="Gene3D" id="3.40.1380.10">
    <property type="match status" value="1"/>
</dbReference>
<dbReference type="Gene3D" id="1.10.287.80">
    <property type="entry name" value="ATP synthase, gamma subunit, helix hairpin domain"/>
    <property type="match status" value="1"/>
</dbReference>
<dbReference type="HAMAP" id="MF_00815">
    <property type="entry name" value="ATP_synth_gamma_bact"/>
    <property type="match status" value="1"/>
</dbReference>
<dbReference type="InterPro" id="IPR035968">
    <property type="entry name" value="ATP_synth_F1_ATPase_gsu"/>
</dbReference>
<dbReference type="InterPro" id="IPR000131">
    <property type="entry name" value="ATP_synth_F1_gsu"/>
</dbReference>
<dbReference type="InterPro" id="IPR023632">
    <property type="entry name" value="ATP_synth_F1_gsu_CS"/>
</dbReference>
<dbReference type="NCBIfam" id="TIGR01146">
    <property type="entry name" value="ATPsyn_F1gamma"/>
    <property type="match status" value="1"/>
</dbReference>
<dbReference type="NCBIfam" id="NF004144">
    <property type="entry name" value="PRK05621.1-1"/>
    <property type="match status" value="1"/>
</dbReference>
<dbReference type="PANTHER" id="PTHR11693">
    <property type="entry name" value="ATP SYNTHASE GAMMA CHAIN"/>
    <property type="match status" value="1"/>
</dbReference>
<dbReference type="PANTHER" id="PTHR11693:SF22">
    <property type="entry name" value="ATP SYNTHASE SUBUNIT GAMMA, MITOCHONDRIAL"/>
    <property type="match status" value="1"/>
</dbReference>
<dbReference type="Pfam" id="PF00231">
    <property type="entry name" value="ATP-synt"/>
    <property type="match status" value="1"/>
</dbReference>
<dbReference type="PRINTS" id="PR00126">
    <property type="entry name" value="ATPASEGAMMA"/>
</dbReference>
<dbReference type="SUPFAM" id="SSF52943">
    <property type="entry name" value="ATP synthase (F1-ATPase), gamma subunit"/>
    <property type="match status" value="1"/>
</dbReference>
<dbReference type="PROSITE" id="PS00153">
    <property type="entry name" value="ATPASE_GAMMA"/>
    <property type="match status" value="1"/>
</dbReference>
<sequence>MAGAKEIRSKIASVQNTQKITKAMEMVAASKMRKSQDRMAASRPYAETMRKVIGHLAHGNLEYKHPYLEDRDVKRVGYLVVSTDRGLCGGLNINLFKKLLAEMKTWTDKGVQCDLAMIGSKGVSFFNSVGGNVVAQVTGMGDNPSLSELIGPVKVMLQAYDEGRLDKLYIVSNKFINTMSQVPTISQLLPLPASDDDDLKHKSWDYLYEPDPKALLDTLLRRYVESQVYQGVVENLASEQAARMVAMKAATDNGGSLIKELQLVYNKARQASITQELTEIVSGAAAV</sequence>
<evidence type="ECO:0000250" key="1"/>
<evidence type="ECO:0000305" key="2"/>
<keyword id="KW-0066">ATP synthesis</keyword>
<keyword id="KW-0997">Cell inner membrane</keyword>
<keyword id="KW-1003">Cell membrane</keyword>
<keyword id="KW-0139">CF(1)</keyword>
<keyword id="KW-0375">Hydrogen ion transport</keyword>
<keyword id="KW-0406">Ion transport</keyword>
<keyword id="KW-0472">Membrane</keyword>
<keyword id="KW-1185">Reference proteome</keyword>
<keyword id="KW-0813">Transport</keyword>